<name>NMT1_PONAB</name>
<dbReference type="EC" id="2.3.1.97" evidence="2"/>
<dbReference type="EMBL" id="CR859064">
    <property type="protein sequence ID" value="CAH91257.1"/>
    <property type="molecule type" value="mRNA"/>
</dbReference>
<dbReference type="RefSeq" id="NP_001127395.1">
    <property type="nucleotide sequence ID" value="NM_001133923.2"/>
</dbReference>
<dbReference type="SMR" id="Q5RAF3"/>
<dbReference type="STRING" id="9601.ENSPPYP00000009343"/>
<dbReference type="GeneID" id="100174462"/>
<dbReference type="KEGG" id="pon:100174462"/>
<dbReference type="CTD" id="4836"/>
<dbReference type="eggNOG" id="KOG2779">
    <property type="taxonomic scope" value="Eukaryota"/>
</dbReference>
<dbReference type="InParanoid" id="Q5RAF3"/>
<dbReference type="OrthoDB" id="60315at2759"/>
<dbReference type="Proteomes" id="UP000001595">
    <property type="component" value="Unplaced"/>
</dbReference>
<dbReference type="GO" id="GO:0005737">
    <property type="term" value="C:cytoplasm"/>
    <property type="evidence" value="ECO:0000250"/>
    <property type="project" value="UniProtKB"/>
</dbReference>
<dbReference type="GO" id="GO:0005829">
    <property type="term" value="C:cytosol"/>
    <property type="evidence" value="ECO:0007669"/>
    <property type="project" value="UniProtKB-SubCell"/>
</dbReference>
<dbReference type="GO" id="GO:0016020">
    <property type="term" value="C:membrane"/>
    <property type="evidence" value="ECO:0007669"/>
    <property type="project" value="UniProtKB-SubCell"/>
</dbReference>
<dbReference type="GO" id="GO:0004379">
    <property type="term" value="F:glycylpeptide N-tetradecanoyltransferase activity"/>
    <property type="evidence" value="ECO:0000250"/>
    <property type="project" value="UniProtKB"/>
</dbReference>
<dbReference type="GO" id="GO:0018030">
    <property type="term" value="F:peptidyl-lysine N6-myristoyltransferase activity"/>
    <property type="evidence" value="ECO:0000250"/>
    <property type="project" value="UniProtKB"/>
</dbReference>
<dbReference type="GO" id="GO:0018008">
    <property type="term" value="P:N-terminal peptidyl-glycine N-myristoylation"/>
    <property type="evidence" value="ECO:0000250"/>
    <property type="project" value="UniProtKB"/>
</dbReference>
<dbReference type="FunFam" id="3.40.630.170:FF:000001">
    <property type="entry name" value="Glycylpeptide N-tetradecanoyltransferase"/>
    <property type="match status" value="1"/>
</dbReference>
<dbReference type="Gene3D" id="3.40.630.170">
    <property type="match status" value="1"/>
</dbReference>
<dbReference type="InterPro" id="IPR016181">
    <property type="entry name" value="Acyl_CoA_acyltransferase"/>
</dbReference>
<dbReference type="InterPro" id="IPR000903">
    <property type="entry name" value="NMT"/>
</dbReference>
<dbReference type="InterPro" id="IPR022677">
    <property type="entry name" value="NMT_C"/>
</dbReference>
<dbReference type="InterPro" id="IPR022678">
    <property type="entry name" value="NMT_CS"/>
</dbReference>
<dbReference type="InterPro" id="IPR022676">
    <property type="entry name" value="NMT_N"/>
</dbReference>
<dbReference type="PANTHER" id="PTHR11377:SF7">
    <property type="entry name" value="GLYCYLPEPTIDE N-TETRADECANOYLTRANSFERASE 1"/>
    <property type="match status" value="1"/>
</dbReference>
<dbReference type="PANTHER" id="PTHR11377">
    <property type="entry name" value="N-MYRISTOYL TRANSFERASE"/>
    <property type="match status" value="1"/>
</dbReference>
<dbReference type="Pfam" id="PF01233">
    <property type="entry name" value="NMT"/>
    <property type="match status" value="1"/>
</dbReference>
<dbReference type="Pfam" id="PF02799">
    <property type="entry name" value="NMT_C"/>
    <property type="match status" value="1"/>
</dbReference>
<dbReference type="PIRSF" id="PIRSF015892">
    <property type="entry name" value="N-myristl_transf"/>
    <property type="match status" value="1"/>
</dbReference>
<dbReference type="SUPFAM" id="SSF55729">
    <property type="entry name" value="Acyl-CoA N-acyltransferases (Nat)"/>
    <property type="match status" value="2"/>
</dbReference>
<dbReference type="PROSITE" id="PS00975">
    <property type="entry name" value="NMT_1"/>
    <property type="match status" value="1"/>
</dbReference>
<dbReference type="PROSITE" id="PS00976">
    <property type="entry name" value="NMT_2"/>
    <property type="match status" value="1"/>
</dbReference>
<comment type="function">
    <text evidence="2">Adds a myristoyl group to the N-terminal glycine residue of certain cellular and viral proteins. Also able to mediate N-terminal lysine myristoylation of proteins: catalyzes myristoylation of ARF6 on both 'Gly-2' and 'Lys-3'. Lysine myristoylation is required to maintain ARF6 on membranes during the GTPase cycle.</text>
</comment>
<comment type="catalytic activity">
    <reaction evidence="2">
        <text>N-terminal glycyl-[protein] + tetradecanoyl-CoA = N-tetradecanoylglycyl-[protein] + CoA + H(+)</text>
        <dbReference type="Rhea" id="RHEA:15521"/>
        <dbReference type="Rhea" id="RHEA-COMP:12666"/>
        <dbReference type="Rhea" id="RHEA-COMP:12667"/>
        <dbReference type="ChEBI" id="CHEBI:15378"/>
        <dbReference type="ChEBI" id="CHEBI:57287"/>
        <dbReference type="ChEBI" id="CHEBI:57385"/>
        <dbReference type="ChEBI" id="CHEBI:64723"/>
        <dbReference type="ChEBI" id="CHEBI:133050"/>
        <dbReference type="EC" id="2.3.1.97"/>
    </reaction>
</comment>
<comment type="catalytic activity">
    <reaction evidence="2">
        <text>N-terminal glycyl-L-lysyl-[protein] + tetradecanoyl-CoA = N-terminal glycyl-(N(6)-tetradecanoyl)-L-lysyl-[protein] + CoA + H(+)</text>
        <dbReference type="Rhea" id="RHEA:70671"/>
        <dbReference type="Rhea" id="RHEA-COMP:17947"/>
        <dbReference type="Rhea" id="RHEA-COMP:17948"/>
        <dbReference type="ChEBI" id="CHEBI:15378"/>
        <dbReference type="ChEBI" id="CHEBI:57287"/>
        <dbReference type="ChEBI" id="CHEBI:57385"/>
        <dbReference type="ChEBI" id="CHEBI:189855"/>
        <dbReference type="ChEBI" id="CHEBI:189856"/>
    </reaction>
    <physiologicalReaction direction="left-to-right" evidence="2">
        <dbReference type="Rhea" id="RHEA:70672"/>
    </physiologicalReaction>
</comment>
<comment type="subcellular location">
    <subcellularLocation>
        <location evidence="2">Cytoplasm</location>
    </subcellularLocation>
    <subcellularLocation>
        <location evidence="2">Cytoplasm</location>
        <location evidence="2">Cytosol</location>
    </subcellularLocation>
    <subcellularLocation>
        <location evidence="2">Membrane</location>
        <topology evidence="2">Peripheral membrane protein</topology>
    </subcellularLocation>
    <text evidence="2">Copurifies with ribosomes.</text>
</comment>
<comment type="similarity">
    <text evidence="4">Belongs to the NMT family.</text>
</comment>
<feature type="chain" id="PRO_0000064223" description="Glycylpeptide N-tetradecanoyltransferase 1">
    <location>
        <begin position="1"/>
        <end position="496"/>
    </location>
</feature>
<feature type="region of interest" description="Disordered" evidence="3">
    <location>
        <begin position="1"/>
        <end position="82"/>
    </location>
</feature>
<feature type="compositionally biased region" description="Basic residues" evidence="3">
    <location>
        <begin position="55"/>
        <end position="66"/>
    </location>
</feature>
<feature type="binding site" evidence="2">
    <location>
        <position position="118"/>
    </location>
    <ligand>
        <name>tetradecanoyl-CoA</name>
        <dbReference type="ChEBI" id="CHEBI:57385"/>
    </ligand>
</feature>
<feature type="binding site" evidence="2">
    <location>
        <position position="119"/>
    </location>
    <ligand>
        <name>tetradecanoyl-CoA</name>
        <dbReference type="ChEBI" id="CHEBI:57385"/>
    </ligand>
</feature>
<feature type="binding site" evidence="2">
    <location>
        <position position="120"/>
    </location>
    <ligand>
        <name>tetradecanoyl-CoA</name>
        <dbReference type="ChEBI" id="CHEBI:57385"/>
    </ligand>
</feature>
<feature type="binding site" evidence="2">
    <location>
        <position position="247"/>
    </location>
    <ligand>
        <name>tetradecanoyl-CoA</name>
        <dbReference type="ChEBI" id="CHEBI:57385"/>
    </ligand>
</feature>
<feature type="binding site" evidence="2">
    <location>
        <position position="248"/>
    </location>
    <ligand>
        <name>tetradecanoyl-CoA</name>
        <dbReference type="ChEBI" id="CHEBI:57385"/>
    </ligand>
</feature>
<feature type="binding site" evidence="2">
    <location>
        <position position="249"/>
    </location>
    <ligand>
        <name>tetradecanoyl-CoA</name>
        <dbReference type="ChEBI" id="CHEBI:57385"/>
    </ligand>
</feature>
<feature type="binding site" evidence="2">
    <location>
        <position position="250"/>
    </location>
    <ligand>
        <name>tetradecanoyl-CoA</name>
        <dbReference type="ChEBI" id="CHEBI:57385"/>
    </ligand>
</feature>
<feature type="binding site" evidence="2">
    <location>
        <position position="256"/>
    </location>
    <ligand>
        <name>tetradecanoyl-CoA</name>
        <dbReference type="ChEBI" id="CHEBI:57385"/>
    </ligand>
</feature>
<feature type="binding site" evidence="2">
    <location>
        <position position="258"/>
    </location>
    <ligand>
        <name>tetradecanoyl-CoA</name>
        <dbReference type="ChEBI" id="CHEBI:57385"/>
    </ligand>
</feature>
<feature type="binding site" evidence="2">
    <location>
        <position position="259"/>
    </location>
    <ligand>
        <name>tetradecanoyl-CoA</name>
        <dbReference type="ChEBI" id="CHEBI:57385"/>
    </ligand>
</feature>
<feature type="binding site" evidence="2">
    <location>
        <position position="260"/>
    </location>
    <ligand>
        <name>tetradecanoyl-CoA</name>
        <dbReference type="ChEBI" id="CHEBI:57385"/>
    </ligand>
</feature>
<feature type="modified residue" description="Phosphoserine" evidence="1">
    <location>
        <position position="31"/>
    </location>
</feature>
<feature type="modified residue" description="Phosphoserine" evidence="2">
    <location>
        <position position="47"/>
    </location>
</feature>
<feature type="modified residue" description="Phosphoserine" evidence="2">
    <location>
        <position position="83"/>
    </location>
</feature>
<reference key="1">
    <citation type="submission" date="2004-11" db="EMBL/GenBank/DDBJ databases">
        <authorList>
            <consortium name="The German cDNA consortium"/>
        </authorList>
    </citation>
    <scope>NUCLEOTIDE SEQUENCE [LARGE SCALE MRNA]</scope>
    <source>
        <tissue>Kidney</tissue>
    </source>
</reference>
<keyword id="KW-0012">Acyltransferase</keyword>
<keyword id="KW-0963">Cytoplasm</keyword>
<keyword id="KW-0472">Membrane</keyword>
<keyword id="KW-0597">Phosphoprotein</keyword>
<keyword id="KW-1185">Reference proteome</keyword>
<keyword id="KW-0808">Transferase</keyword>
<proteinExistence type="evidence at transcript level"/>
<evidence type="ECO:0000250" key="1">
    <source>
        <dbReference type="UniProtKB" id="O70310"/>
    </source>
</evidence>
<evidence type="ECO:0000250" key="2">
    <source>
        <dbReference type="UniProtKB" id="P30419"/>
    </source>
</evidence>
<evidence type="ECO:0000256" key="3">
    <source>
        <dbReference type="SAM" id="MobiDB-lite"/>
    </source>
</evidence>
<evidence type="ECO:0000305" key="4"/>
<organism>
    <name type="scientific">Pongo abelii</name>
    <name type="common">Sumatran orangutan</name>
    <name type="synonym">Pongo pygmaeus abelii</name>
    <dbReference type="NCBI Taxonomy" id="9601"/>
    <lineage>
        <taxon>Eukaryota</taxon>
        <taxon>Metazoa</taxon>
        <taxon>Chordata</taxon>
        <taxon>Craniata</taxon>
        <taxon>Vertebrata</taxon>
        <taxon>Euteleostomi</taxon>
        <taxon>Mammalia</taxon>
        <taxon>Eutheria</taxon>
        <taxon>Euarchontoglires</taxon>
        <taxon>Primates</taxon>
        <taxon>Haplorrhini</taxon>
        <taxon>Catarrhini</taxon>
        <taxon>Hominidae</taxon>
        <taxon>Pongo</taxon>
    </lineage>
</organism>
<gene>
    <name type="primary">NMT1</name>
</gene>
<protein>
    <recommendedName>
        <fullName>Glycylpeptide N-tetradecanoyltransferase 1</fullName>
        <ecNumber evidence="2">2.3.1.97</ecNumber>
    </recommendedName>
    <alternativeName>
        <fullName>Myristoyl-CoA:protein N-myristoyltransferase 1</fullName>
        <shortName>NMT 1</shortName>
        <shortName>Type I N-myristoyltransferase</shortName>
    </alternativeName>
    <alternativeName>
        <fullName>Peptide N-myristoyltransferase 1</fullName>
    </alternativeName>
</protein>
<sequence length="496" mass="56746">MADESETAVKPPAPPLPQMMEGNGNGHEHCSDCENEEDNSYNRGGLSPANDTGAKKKKKKQKKKKEKGSETDSAQDQPVKMNSLPAERIQEIQKAIELFSVGQGPAKTMEEASKRSYQFWDTQPVPKLGEVVNTHGPVEPDKDNIRQEPYTLPQGSTWDALDLGDRGVLKELYTLLNENYVEDDDNMFRFDYSPEFLLWALRPPGWLPQWHCGVRVVSSRKLVGFISAIPANIHIYDTEKKMVEINFLCVHKKLRSKRVAPVLIREITRRIHLEGVFQAVYTAGVVLPKPVGTCRYWHRSLNPRKLIEVKFSHLSRNMTMQRTMKLYRLPETPKTAGLRPMETKDIPVVHQLLTRYLKQFHLTPVMSQEEVEHWFYPQENIIDTFVVENANGEVTDFLSFYTLPSTIMNHPTHKSLKAAYSFYNVHTQTPLLDLMSDALVLAKMKGFDVFNALDLMENKTFLEKLKFGIGDGNLQYYLYNWKCPSMGAEKVGLVLQ</sequence>
<accession>Q5RAF3</accession>